<accession>Q3M4S2</accession>
<sequence length="136" mass="15548">MSNSSPETVSQPSQEVKYGEREIAEGQLITFPNPRVGRRYDINITLPEFTCKCPFSGYPDFATIYITYVPDERVVELKALKLYINSYRDRYISHEESANQILDDFVAACDPLEATVKADFTPRGNVHTVVEVKHRK</sequence>
<protein>
    <recommendedName>
        <fullName evidence="1">NADPH-dependent 7-cyano-7-deazaguanine reductase</fullName>
        <ecNumber evidence="1">1.7.1.13</ecNumber>
    </recommendedName>
    <alternativeName>
        <fullName evidence="1">7-cyano-7-carbaguanine reductase</fullName>
    </alternativeName>
    <alternativeName>
        <fullName evidence="1">NADPH-dependent nitrile oxidoreductase</fullName>
    </alternativeName>
    <alternativeName>
        <fullName evidence="1">PreQ(0) reductase</fullName>
    </alternativeName>
</protein>
<gene>
    <name evidence="1" type="primary">queF</name>
    <name type="ordered locus">Ava_4416</name>
</gene>
<comment type="function">
    <text evidence="1">Catalyzes the NADPH-dependent reduction of 7-cyano-7-deazaguanine (preQ0) to 7-aminomethyl-7-deazaguanine (preQ1).</text>
</comment>
<comment type="catalytic activity">
    <reaction evidence="1">
        <text>7-aminomethyl-7-carbaguanine + 2 NADP(+) = 7-cyano-7-deazaguanine + 2 NADPH + 3 H(+)</text>
        <dbReference type="Rhea" id="RHEA:13409"/>
        <dbReference type="ChEBI" id="CHEBI:15378"/>
        <dbReference type="ChEBI" id="CHEBI:45075"/>
        <dbReference type="ChEBI" id="CHEBI:57783"/>
        <dbReference type="ChEBI" id="CHEBI:58349"/>
        <dbReference type="ChEBI" id="CHEBI:58703"/>
        <dbReference type="EC" id="1.7.1.13"/>
    </reaction>
</comment>
<comment type="pathway">
    <text evidence="1">tRNA modification; tRNA-queuosine biosynthesis.</text>
</comment>
<comment type="subcellular location">
    <subcellularLocation>
        <location evidence="1">Cytoplasm</location>
    </subcellularLocation>
</comment>
<comment type="similarity">
    <text evidence="1">Belongs to the GTP cyclohydrolase I family. QueF type 1 subfamily.</text>
</comment>
<feature type="chain" id="PRO_0000247677" description="NADPH-dependent 7-cyano-7-deazaguanine reductase">
    <location>
        <begin position="1"/>
        <end position="136"/>
    </location>
</feature>
<feature type="active site" description="Thioimide intermediate" evidence="1">
    <location>
        <position position="53"/>
    </location>
</feature>
<feature type="active site" description="Proton donor" evidence="1">
    <location>
        <position position="60"/>
    </location>
</feature>
<feature type="binding site" evidence="1">
    <location>
        <begin position="75"/>
        <end position="77"/>
    </location>
    <ligand>
        <name>substrate</name>
    </ligand>
</feature>
<feature type="binding site" evidence="1">
    <location>
        <begin position="94"/>
        <end position="95"/>
    </location>
    <ligand>
        <name>substrate</name>
    </ligand>
</feature>
<reference key="1">
    <citation type="journal article" date="2014" name="Stand. Genomic Sci.">
        <title>Complete genome sequence of Anabaena variabilis ATCC 29413.</title>
        <authorList>
            <person name="Thiel T."/>
            <person name="Pratte B.S."/>
            <person name="Zhong J."/>
            <person name="Goodwin L."/>
            <person name="Copeland A."/>
            <person name="Lucas S."/>
            <person name="Han C."/>
            <person name="Pitluck S."/>
            <person name="Land M.L."/>
            <person name="Kyrpides N.C."/>
            <person name="Woyke T."/>
        </authorList>
    </citation>
    <scope>NUCLEOTIDE SEQUENCE [LARGE SCALE GENOMIC DNA]</scope>
    <source>
        <strain>ATCC 29413 / PCC 7937</strain>
    </source>
</reference>
<proteinExistence type="inferred from homology"/>
<dbReference type="EC" id="1.7.1.13" evidence="1"/>
<dbReference type="EMBL" id="CP000117">
    <property type="protein sequence ID" value="ABA24014.1"/>
    <property type="molecule type" value="Genomic_DNA"/>
</dbReference>
<dbReference type="SMR" id="Q3M4S2"/>
<dbReference type="STRING" id="240292.Ava_4416"/>
<dbReference type="KEGG" id="ava:Ava_4416"/>
<dbReference type="eggNOG" id="COG0780">
    <property type="taxonomic scope" value="Bacteria"/>
</dbReference>
<dbReference type="HOGENOM" id="CLU_102489_1_1_3"/>
<dbReference type="UniPathway" id="UPA00392"/>
<dbReference type="Proteomes" id="UP000002533">
    <property type="component" value="Chromosome"/>
</dbReference>
<dbReference type="GO" id="GO:0005737">
    <property type="term" value="C:cytoplasm"/>
    <property type="evidence" value="ECO:0007669"/>
    <property type="project" value="UniProtKB-SubCell"/>
</dbReference>
<dbReference type="GO" id="GO:0033739">
    <property type="term" value="F:preQ1 synthase activity"/>
    <property type="evidence" value="ECO:0007669"/>
    <property type="project" value="UniProtKB-UniRule"/>
</dbReference>
<dbReference type="GO" id="GO:0008616">
    <property type="term" value="P:queuosine biosynthetic process"/>
    <property type="evidence" value="ECO:0007669"/>
    <property type="project" value="UniProtKB-UniRule"/>
</dbReference>
<dbReference type="GO" id="GO:0006400">
    <property type="term" value="P:tRNA modification"/>
    <property type="evidence" value="ECO:0007669"/>
    <property type="project" value="UniProtKB-UniRule"/>
</dbReference>
<dbReference type="Gene3D" id="3.30.1130.10">
    <property type="match status" value="1"/>
</dbReference>
<dbReference type="HAMAP" id="MF_00818">
    <property type="entry name" value="QueF_type1"/>
    <property type="match status" value="1"/>
</dbReference>
<dbReference type="InterPro" id="IPR043133">
    <property type="entry name" value="GTP-CH-I_C/QueF"/>
</dbReference>
<dbReference type="InterPro" id="IPR050084">
    <property type="entry name" value="NADPH_dep_7-cyano-7-deazaG_red"/>
</dbReference>
<dbReference type="InterPro" id="IPR029500">
    <property type="entry name" value="QueF"/>
</dbReference>
<dbReference type="InterPro" id="IPR016856">
    <property type="entry name" value="QueF_type1"/>
</dbReference>
<dbReference type="NCBIfam" id="TIGR03139">
    <property type="entry name" value="QueF-II"/>
    <property type="match status" value="1"/>
</dbReference>
<dbReference type="PANTHER" id="PTHR34354">
    <property type="entry name" value="NADPH-DEPENDENT 7-CYANO-7-DEAZAGUANINE REDUCTASE"/>
    <property type="match status" value="1"/>
</dbReference>
<dbReference type="PANTHER" id="PTHR34354:SF1">
    <property type="entry name" value="NADPH-DEPENDENT 7-CYANO-7-DEAZAGUANINE REDUCTASE"/>
    <property type="match status" value="1"/>
</dbReference>
<dbReference type="Pfam" id="PF14489">
    <property type="entry name" value="QueF"/>
    <property type="match status" value="1"/>
</dbReference>
<dbReference type="PIRSF" id="PIRSF027377">
    <property type="entry name" value="Nitrile_oxidored_QueF"/>
    <property type="match status" value="1"/>
</dbReference>
<dbReference type="SUPFAM" id="SSF55620">
    <property type="entry name" value="Tetrahydrobiopterin biosynthesis enzymes-like"/>
    <property type="match status" value="1"/>
</dbReference>
<organism>
    <name type="scientific">Trichormus variabilis (strain ATCC 29413 / PCC 7937)</name>
    <name type="common">Anabaena variabilis</name>
    <dbReference type="NCBI Taxonomy" id="240292"/>
    <lineage>
        <taxon>Bacteria</taxon>
        <taxon>Bacillati</taxon>
        <taxon>Cyanobacteriota</taxon>
        <taxon>Cyanophyceae</taxon>
        <taxon>Nostocales</taxon>
        <taxon>Nostocaceae</taxon>
        <taxon>Trichormus</taxon>
    </lineage>
</organism>
<evidence type="ECO:0000255" key="1">
    <source>
        <dbReference type="HAMAP-Rule" id="MF_00818"/>
    </source>
</evidence>
<name>QUEF_TRIV2</name>
<keyword id="KW-0963">Cytoplasm</keyword>
<keyword id="KW-0521">NADP</keyword>
<keyword id="KW-0560">Oxidoreductase</keyword>
<keyword id="KW-0671">Queuosine biosynthesis</keyword>